<keyword id="KW-0028">Amino-acid biosynthesis</keyword>
<keyword id="KW-0055">Arginine biosynthesis</keyword>
<keyword id="KW-0170">Cobalt</keyword>
<keyword id="KW-0963">Cytoplasm</keyword>
<keyword id="KW-0378">Hydrolase</keyword>
<keyword id="KW-0479">Metal-binding</keyword>
<keyword id="KW-0862">Zinc</keyword>
<evidence type="ECO:0000255" key="1">
    <source>
        <dbReference type="HAMAP-Rule" id="MF_01108"/>
    </source>
</evidence>
<gene>
    <name evidence="1" type="primary">argE</name>
    <name type="ordered locus">PC1_4061</name>
</gene>
<dbReference type="EC" id="3.5.1.16" evidence="1"/>
<dbReference type="EMBL" id="CP001657">
    <property type="protein sequence ID" value="ACT15076.1"/>
    <property type="molecule type" value="Genomic_DNA"/>
</dbReference>
<dbReference type="SMR" id="C6DI82"/>
<dbReference type="STRING" id="561230.PC1_4061"/>
<dbReference type="KEGG" id="pct:PC1_4061"/>
<dbReference type="eggNOG" id="COG0624">
    <property type="taxonomic scope" value="Bacteria"/>
</dbReference>
<dbReference type="HOGENOM" id="CLU_021802_2_4_6"/>
<dbReference type="OrthoDB" id="3665926at2"/>
<dbReference type="UniPathway" id="UPA00068">
    <property type="reaction ID" value="UER00110"/>
</dbReference>
<dbReference type="Proteomes" id="UP000002736">
    <property type="component" value="Chromosome"/>
</dbReference>
<dbReference type="GO" id="GO:0005737">
    <property type="term" value="C:cytoplasm"/>
    <property type="evidence" value="ECO:0007669"/>
    <property type="project" value="UniProtKB-SubCell"/>
</dbReference>
<dbReference type="GO" id="GO:0008777">
    <property type="term" value="F:acetylornithine deacetylase activity"/>
    <property type="evidence" value="ECO:0007669"/>
    <property type="project" value="UniProtKB-UniRule"/>
</dbReference>
<dbReference type="GO" id="GO:0008270">
    <property type="term" value="F:zinc ion binding"/>
    <property type="evidence" value="ECO:0007669"/>
    <property type="project" value="UniProtKB-UniRule"/>
</dbReference>
<dbReference type="GO" id="GO:0006526">
    <property type="term" value="P:L-arginine biosynthetic process"/>
    <property type="evidence" value="ECO:0007669"/>
    <property type="project" value="UniProtKB-UniRule"/>
</dbReference>
<dbReference type="CDD" id="cd03894">
    <property type="entry name" value="M20_ArgE"/>
    <property type="match status" value="1"/>
</dbReference>
<dbReference type="FunFam" id="3.30.70.360:FF:000003">
    <property type="entry name" value="Acetylornithine deacetylase"/>
    <property type="match status" value="1"/>
</dbReference>
<dbReference type="Gene3D" id="3.30.70.360">
    <property type="match status" value="1"/>
</dbReference>
<dbReference type="Gene3D" id="3.40.630.10">
    <property type="entry name" value="Zn peptidases"/>
    <property type="match status" value="1"/>
</dbReference>
<dbReference type="HAMAP" id="MF_01108">
    <property type="entry name" value="ArgE"/>
    <property type="match status" value="1"/>
</dbReference>
<dbReference type="InterPro" id="IPR010169">
    <property type="entry name" value="AcOrn-deacetyl"/>
</dbReference>
<dbReference type="InterPro" id="IPR001261">
    <property type="entry name" value="ArgE/DapE_CS"/>
</dbReference>
<dbReference type="InterPro" id="IPR036264">
    <property type="entry name" value="Bact_exopeptidase_dim_dom"/>
</dbReference>
<dbReference type="InterPro" id="IPR002933">
    <property type="entry name" value="Peptidase_M20"/>
</dbReference>
<dbReference type="InterPro" id="IPR011650">
    <property type="entry name" value="Peptidase_M20_dimer"/>
</dbReference>
<dbReference type="InterPro" id="IPR050072">
    <property type="entry name" value="Peptidase_M20A"/>
</dbReference>
<dbReference type="NCBIfam" id="TIGR01892">
    <property type="entry name" value="AcOrn-deacetyl"/>
    <property type="match status" value="1"/>
</dbReference>
<dbReference type="NCBIfam" id="NF003474">
    <property type="entry name" value="PRK05111.1"/>
    <property type="match status" value="1"/>
</dbReference>
<dbReference type="PANTHER" id="PTHR43808">
    <property type="entry name" value="ACETYLORNITHINE DEACETYLASE"/>
    <property type="match status" value="1"/>
</dbReference>
<dbReference type="PANTHER" id="PTHR43808:SF1">
    <property type="entry name" value="ACETYLORNITHINE DEACETYLASE"/>
    <property type="match status" value="1"/>
</dbReference>
<dbReference type="Pfam" id="PF07687">
    <property type="entry name" value="M20_dimer"/>
    <property type="match status" value="1"/>
</dbReference>
<dbReference type="Pfam" id="PF01546">
    <property type="entry name" value="Peptidase_M20"/>
    <property type="match status" value="1"/>
</dbReference>
<dbReference type="SUPFAM" id="SSF55031">
    <property type="entry name" value="Bacterial exopeptidase dimerisation domain"/>
    <property type="match status" value="1"/>
</dbReference>
<dbReference type="SUPFAM" id="SSF53187">
    <property type="entry name" value="Zn-dependent exopeptidases"/>
    <property type="match status" value="1"/>
</dbReference>
<dbReference type="PROSITE" id="PS00758">
    <property type="entry name" value="ARGE_DAPE_CPG2_1"/>
    <property type="match status" value="1"/>
</dbReference>
<dbReference type="PROSITE" id="PS00759">
    <property type="entry name" value="ARGE_DAPE_CPG2_2"/>
    <property type="match status" value="1"/>
</dbReference>
<feature type="chain" id="PRO_1000213563" description="Acetylornithine deacetylase">
    <location>
        <begin position="1"/>
        <end position="383"/>
    </location>
</feature>
<feature type="active site" evidence="1">
    <location>
        <position position="82"/>
    </location>
</feature>
<feature type="active site" evidence="1">
    <location>
        <position position="144"/>
    </location>
</feature>
<feature type="binding site" evidence="1">
    <location>
        <position position="80"/>
    </location>
    <ligand>
        <name>Zn(2+)</name>
        <dbReference type="ChEBI" id="CHEBI:29105"/>
        <label>1</label>
    </ligand>
</feature>
<feature type="binding site" evidence="1">
    <location>
        <position position="112"/>
    </location>
    <ligand>
        <name>Zn(2+)</name>
        <dbReference type="ChEBI" id="CHEBI:29105"/>
        <label>1</label>
    </ligand>
</feature>
<feature type="binding site" evidence="1">
    <location>
        <position position="112"/>
    </location>
    <ligand>
        <name>Zn(2+)</name>
        <dbReference type="ChEBI" id="CHEBI:29105"/>
        <label>2</label>
    </ligand>
</feature>
<feature type="binding site" evidence="1">
    <location>
        <position position="145"/>
    </location>
    <ligand>
        <name>Zn(2+)</name>
        <dbReference type="ChEBI" id="CHEBI:29105"/>
        <label>2</label>
    </ligand>
</feature>
<feature type="binding site" evidence="1">
    <location>
        <position position="169"/>
    </location>
    <ligand>
        <name>Zn(2+)</name>
        <dbReference type="ChEBI" id="CHEBI:29105"/>
        <label>1</label>
    </ligand>
</feature>
<feature type="binding site" evidence="1">
    <location>
        <position position="355"/>
    </location>
    <ligand>
        <name>Zn(2+)</name>
        <dbReference type="ChEBI" id="CHEBI:29105"/>
        <label>2</label>
    </ligand>
</feature>
<name>ARGE_PECCP</name>
<accession>C6DI82</accession>
<comment type="function">
    <text evidence="1">Catalyzes the hydrolysis of the amide bond of N(2)-acetylated L-amino acids. Cleaves the acetyl group from N-acetyl-L-ornithine to form L-ornithine, an intermediate in L-arginine biosynthesis pathway, and a branchpoint in the synthesis of polyamines.</text>
</comment>
<comment type="catalytic activity">
    <reaction evidence="1">
        <text>N(2)-acetyl-L-ornithine + H2O = L-ornithine + acetate</text>
        <dbReference type="Rhea" id="RHEA:15941"/>
        <dbReference type="ChEBI" id="CHEBI:15377"/>
        <dbReference type="ChEBI" id="CHEBI:30089"/>
        <dbReference type="ChEBI" id="CHEBI:46911"/>
        <dbReference type="ChEBI" id="CHEBI:57805"/>
        <dbReference type="EC" id="3.5.1.16"/>
    </reaction>
</comment>
<comment type="cofactor">
    <cofactor evidence="1">
        <name>Zn(2+)</name>
        <dbReference type="ChEBI" id="CHEBI:29105"/>
    </cofactor>
    <cofactor evidence="1">
        <name>Co(2+)</name>
        <dbReference type="ChEBI" id="CHEBI:48828"/>
    </cofactor>
    <text evidence="1">Binds 2 Zn(2+) or Co(2+) ions per subunit.</text>
</comment>
<comment type="cofactor">
    <cofactor evidence="1">
        <name>glutathione</name>
        <dbReference type="ChEBI" id="CHEBI:57925"/>
    </cofactor>
</comment>
<comment type="pathway">
    <text evidence="1">Amino-acid biosynthesis; L-arginine biosynthesis; L-ornithine from N(2)-acetyl-L-ornithine (linear): step 1/1.</text>
</comment>
<comment type="subunit">
    <text evidence="1">Homodimer.</text>
</comment>
<comment type="subcellular location">
    <subcellularLocation>
        <location evidence="1">Cytoplasm</location>
    </subcellularLocation>
</comment>
<comment type="similarity">
    <text evidence="1">Belongs to the peptidase M20A family. ArgE subfamily.</text>
</comment>
<protein>
    <recommendedName>
        <fullName evidence="1">Acetylornithine deacetylase</fullName>
        <shortName evidence="1">AO</shortName>
        <shortName evidence="1">Acetylornithinase</shortName>
        <ecNumber evidence="1">3.5.1.16</ecNumber>
    </recommendedName>
    <alternativeName>
        <fullName evidence="1">N-acetylornithinase</fullName>
        <shortName evidence="1">NAO</shortName>
    </alternativeName>
</protein>
<sequence length="383" mass="42384">MKMNLPPFIELYRALIATPSISATDSALDQSNHTLINLLAGWFGDLGFHVEVQPVPGTLNKFNMLARIGEGKGGLLLAGHTDTVPFDDGRWTRDPFTLTEHDNKLYGLGTADMKGFFAFILDALRDIDPTKLTKPLYVLATADEETTMAGAKYFSESTQIRPDCAIIGEPTSLQPVRAHKGHMSNAIRIQGQSGHSSDPSRGVNAIELMHEAISHLLVLRNTLQERYHNPIFHIPYPTMNLGHIHGGDAANRICGCCELHMDIRPLPGITLNDLDGLLSEALEPVSQRWPGRLTISELHPPIPGYECPPDHRLVSVVEKLLGTKTEIVNYCTEAPFIQTLCPTLVLGPGSIEQAHQPDEYIDTKFIKPTRELISQVIHHFCHH</sequence>
<reference key="1">
    <citation type="submission" date="2009-07" db="EMBL/GenBank/DDBJ databases">
        <title>Complete sequence of Pectobacterium carotovorum subsp. carotovorum PC1.</title>
        <authorList>
            <consortium name="US DOE Joint Genome Institute"/>
            <person name="Lucas S."/>
            <person name="Copeland A."/>
            <person name="Lapidus A."/>
            <person name="Glavina del Rio T."/>
            <person name="Tice H."/>
            <person name="Bruce D."/>
            <person name="Goodwin L."/>
            <person name="Pitluck S."/>
            <person name="Munk A.C."/>
            <person name="Brettin T."/>
            <person name="Detter J.C."/>
            <person name="Han C."/>
            <person name="Tapia R."/>
            <person name="Larimer F."/>
            <person name="Land M."/>
            <person name="Hauser L."/>
            <person name="Kyrpides N."/>
            <person name="Mikhailova N."/>
            <person name="Balakrishnan V."/>
            <person name="Glasner J."/>
            <person name="Perna N.T."/>
        </authorList>
    </citation>
    <scope>NUCLEOTIDE SEQUENCE [LARGE SCALE GENOMIC DNA]</scope>
    <source>
        <strain>PC1</strain>
    </source>
</reference>
<proteinExistence type="inferred from homology"/>
<organism>
    <name type="scientific">Pectobacterium carotovorum subsp. carotovorum (strain PC1)</name>
    <dbReference type="NCBI Taxonomy" id="561230"/>
    <lineage>
        <taxon>Bacteria</taxon>
        <taxon>Pseudomonadati</taxon>
        <taxon>Pseudomonadota</taxon>
        <taxon>Gammaproteobacteria</taxon>
        <taxon>Enterobacterales</taxon>
        <taxon>Pectobacteriaceae</taxon>
        <taxon>Pectobacterium</taxon>
    </lineage>
</organism>